<comment type="function">
    <text evidence="1">Phosphorylation of dTMP to form dTDP in both de novo and salvage pathways of dTTP synthesis.</text>
</comment>
<comment type="catalytic activity">
    <reaction evidence="1">
        <text>dTMP + ATP = dTDP + ADP</text>
        <dbReference type="Rhea" id="RHEA:13517"/>
        <dbReference type="ChEBI" id="CHEBI:30616"/>
        <dbReference type="ChEBI" id="CHEBI:58369"/>
        <dbReference type="ChEBI" id="CHEBI:63528"/>
        <dbReference type="ChEBI" id="CHEBI:456216"/>
        <dbReference type="EC" id="2.7.4.9"/>
    </reaction>
</comment>
<comment type="similarity">
    <text evidence="1">Belongs to the thymidylate kinase family.</text>
</comment>
<organism>
    <name type="scientific">Syntrophotalea carbinolica (strain DSM 2380 / NBRC 103641 / GraBd1)</name>
    <name type="common">Pelobacter carbinolicus</name>
    <dbReference type="NCBI Taxonomy" id="338963"/>
    <lineage>
        <taxon>Bacteria</taxon>
        <taxon>Pseudomonadati</taxon>
        <taxon>Thermodesulfobacteriota</taxon>
        <taxon>Desulfuromonadia</taxon>
        <taxon>Desulfuromonadales</taxon>
        <taxon>Syntrophotaleaceae</taxon>
        <taxon>Syntrophotalea</taxon>
    </lineage>
</organism>
<protein>
    <recommendedName>
        <fullName evidence="1">Thymidylate kinase</fullName>
        <ecNumber evidence="1">2.7.4.9</ecNumber>
    </recommendedName>
    <alternativeName>
        <fullName evidence="1">dTMP kinase</fullName>
    </alternativeName>
</protein>
<reference key="1">
    <citation type="submission" date="2005-10" db="EMBL/GenBank/DDBJ databases">
        <title>Complete sequence of Pelobacter carbinolicus DSM 2380.</title>
        <authorList>
            <person name="Copeland A."/>
            <person name="Lucas S."/>
            <person name="Lapidus A."/>
            <person name="Barry K."/>
            <person name="Detter J.C."/>
            <person name="Glavina T."/>
            <person name="Hammon N."/>
            <person name="Israni S."/>
            <person name="Pitluck S."/>
            <person name="Chertkov O."/>
            <person name="Schmutz J."/>
            <person name="Larimer F."/>
            <person name="Land M."/>
            <person name="Kyrpides N."/>
            <person name="Ivanova N."/>
            <person name="Richardson P."/>
        </authorList>
    </citation>
    <scope>NUCLEOTIDE SEQUENCE [LARGE SCALE GENOMIC DNA]</scope>
    <source>
        <strain>DSM 2380 / NBRC 103641 / GraBd1</strain>
    </source>
</reference>
<keyword id="KW-0067">ATP-binding</keyword>
<keyword id="KW-0418">Kinase</keyword>
<keyword id="KW-0545">Nucleotide biosynthesis</keyword>
<keyword id="KW-0547">Nucleotide-binding</keyword>
<keyword id="KW-1185">Reference proteome</keyword>
<keyword id="KW-0808">Transferase</keyword>
<evidence type="ECO:0000255" key="1">
    <source>
        <dbReference type="HAMAP-Rule" id="MF_00165"/>
    </source>
</evidence>
<name>KTHY_SYNC1</name>
<sequence length="216" mass="23844">MSFFISLEGIEGSGKTTQIKRLADRLESLGHAVLITREPGGCPIADQIRQILLHPDNGHLDPKAELLLYAAARAQHVAEVIRPALDQGKIVLCDRYCDATLAYQGYARGLDLPMVKQLNELAAGNCRPHLTLLLDMPHDRGLLRARSRNALGAGPEEGRFEQESLAFHNKVRQGYLDLARQEPQRIKVVDANGTLDEVCHRIWLTTSNALNLPGGM</sequence>
<dbReference type="EC" id="2.7.4.9" evidence="1"/>
<dbReference type="EMBL" id="CP000142">
    <property type="protein sequence ID" value="ABA88934.1"/>
    <property type="molecule type" value="Genomic_DNA"/>
</dbReference>
<dbReference type="RefSeq" id="WP_011341425.1">
    <property type="nucleotide sequence ID" value="NC_007498.2"/>
</dbReference>
<dbReference type="SMR" id="Q3A3X3"/>
<dbReference type="STRING" id="338963.Pcar_1691"/>
<dbReference type="KEGG" id="pca:Pcar_1691"/>
<dbReference type="eggNOG" id="COG0125">
    <property type="taxonomic scope" value="Bacteria"/>
</dbReference>
<dbReference type="HOGENOM" id="CLU_049131_0_2_7"/>
<dbReference type="OrthoDB" id="9774907at2"/>
<dbReference type="Proteomes" id="UP000002534">
    <property type="component" value="Chromosome"/>
</dbReference>
<dbReference type="GO" id="GO:0005829">
    <property type="term" value="C:cytosol"/>
    <property type="evidence" value="ECO:0007669"/>
    <property type="project" value="TreeGrafter"/>
</dbReference>
<dbReference type="GO" id="GO:0005524">
    <property type="term" value="F:ATP binding"/>
    <property type="evidence" value="ECO:0007669"/>
    <property type="project" value="UniProtKB-UniRule"/>
</dbReference>
<dbReference type="GO" id="GO:0004798">
    <property type="term" value="F:dTMP kinase activity"/>
    <property type="evidence" value="ECO:0007669"/>
    <property type="project" value="UniProtKB-UniRule"/>
</dbReference>
<dbReference type="GO" id="GO:0006233">
    <property type="term" value="P:dTDP biosynthetic process"/>
    <property type="evidence" value="ECO:0007669"/>
    <property type="project" value="InterPro"/>
</dbReference>
<dbReference type="GO" id="GO:0006235">
    <property type="term" value="P:dTTP biosynthetic process"/>
    <property type="evidence" value="ECO:0007669"/>
    <property type="project" value="UniProtKB-UniRule"/>
</dbReference>
<dbReference type="GO" id="GO:0006227">
    <property type="term" value="P:dUDP biosynthetic process"/>
    <property type="evidence" value="ECO:0007669"/>
    <property type="project" value="TreeGrafter"/>
</dbReference>
<dbReference type="CDD" id="cd01672">
    <property type="entry name" value="TMPK"/>
    <property type="match status" value="1"/>
</dbReference>
<dbReference type="FunFam" id="3.40.50.300:FF:000225">
    <property type="entry name" value="Thymidylate kinase"/>
    <property type="match status" value="1"/>
</dbReference>
<dbReference type="Gene3D" id="3.40.50.300">
    <property type="entry name" value="P-loop containing nucleotide triphosphate hydrolases"/>
    <property type="match status" value="1"/>
</dbReference>
<dbReference type="HAMAP" id="MF_00165">
    <property type="entry name" value="Thymidylate_kinase"/>
    <property type="match status" value="1"/>
</dbReference>
<dbReference type="InterPro" id="IPR027417">
    <property type="entry name" value="P-loop_NTPase"/>
</dbReference>
<dbReference type="InterPro" id="IPR039430">
    <property type="entry name" value="Thymidylate_kin-like_dom"/>
</dbReference>
<dbReference type="InterPro" id="IPR018094">
    <property type="entry name" value="Thymidylate_kinase"/>
</dbReference>
<dbReference type="NCBIfam" id="TIGR00041">
    <property type="entry name" value="DTMP_kinase"/>
    <property type="match status" value="1"/>
</dbReference>
<dbReference type="PANTHER" id="PTHR10344">
    <property type="entry name" value="THYMIDYLATE KINASE"/>
    <property type="match status" value="1"/>
</dbReference>
<dbReference type="PANTHER" id="PTHR10344:SF4">
    <property type="entry name" value="UMP-CMP KINASE 2, MITOCHONDRIAL"/>
    <property type="match status" value="1"/>
</dbReference>
<dbReference type="Pfam" id="PF02223">
    <property type="entry name" value="Thymidylate_kin"/>
    <property type="match status" value="1"/>
</dbReference>
<dbReference type="SUPFAM" id="SSF52540">
    <property type="entry name" value="P-loop containing nucleoside triphosphate hydrolases"/>
    <property type="match status" value="1"/>
</dbReference>
<feature type="chain" id="PRO_1000023241" description="Thymidylate kinase">
    <location>
        <begin position="1"/>
        <end position="216"/>
    </location>
</feature>
<feature type="binding site" evidence="1">
    <location>
        <begin position="9"/>
        <end position="16"/>
    </location>
    <ligand>
        <name>ATP</name>
        <dbReference type="ChEBI" id="CHEBI:30616"/>
    </ligand>
</feature>
<accession>Q3A3X3</accession>
<gene>
    <name evidence="1" type="primary">tmk</name>
    <name type="ordered locus">Pcar_1691</name>
</gene>
<proteinExistence type="inferred from homology"/>